<protein>
    <recommendedName>
        <fullName>Cysteine-rich receptor-like protein kinase 6</fullName>
        <shortName>Cysteine-rich RLK6</shortName>
        <ecNumber>2.7.11.-</ecNumber>
    </recommendedName>
    <alternativeName>
        <fullName>Receptor-like protein kinase 5</fullName>
    </alternativeName>
</protein>
<sequence>MSSLISFNFLFLFSFLTSSFTASAQDPFYLNHYCPNTTTYSSNSTYSTNLRTLLSSLSSRNASYSTGFQNATAGKAPDRVTGLFLCRGDVSPEVCRNCVAFSVNQTLNLCPKVREAVFYYEQCILRYSHKNILSTAITNEGEFILSNTNTISPNQKQIDGFTSFVSSTMSEAAGKAANSSRKLYTVNTELTAYQNLYGLLQCTPDLTRADCLSCLQSSINGMALSRIGARLYWPSCTARYELYPFYNESAIETPPLPPPPPPPPPRESLVSTPPISSSSLPGKSGNSTVLVVAVVVLAVLLFIALVGYCFLAKKKKKTFDTASASEVGDDMATADSLQLDYRTIQTATNDFAESNKIGRGGFGEVYKGTFSNGKEVAVKRLSKNSRQGEAEFKTEVVVVAKLQHRNLVRLLGFSLQGEERILVYEYMPNKSLDCLLFDPTKQIQLDWMQRYNIIGGIARGILYLHQDSRLTIIHRDLKASNILLDADINPKIADFGMARIFGLDQTQDNTSRIVGTYGYMAPEYAMHGQFSMKSDVYSFGVLVLEIISGRKNSSFGESDGAQDLLTHAWRLWTNKKALDLVDPLIAENCQNSEVVRCIHIGLLCVQEDPAKRPAISTVFMMLTSNTVTLPVPRQPGFFIQCRAVKDPLDSDQSTTTKSFPASIDDESITDLYPR</sequence>
<keyword id="KW-0025">Alternative splicing</keyword>
<keyword id="KW-0067">ATP-binding</keyword>
<keyword id="KW-0325">Glycoprotein</keyword>
<keyword id="KW-0418">Kinase</keyword>
<keyword id="KW-0472">Membrane</keyword>
<keyword id="KW-0547">Nucleotide-binding</keyword>
<keyword id="KW-0597">Phosphoprotein</keyword>
<keyword id="KW-0675">Receptor</keyword>
<keyword id="KW-1185">Reference proteome</keyword>
<keyword id="KW-0677">Repeat</keyword>
<keyword id="KW-0723">Serine/threonine-protein kinase</keyword>
<keyword id="KW-0732">Signal</keyword>
<keyword id="KW-0808">Transferase</keyword>
<keyword id="KW-0812">Transmembrane</keyword>
<keyword id="KW-1133">Transmembrane helix</keyword>
<gene>
    <name type="primary">CRK6</name>
    <name type="synonym">RLK5</name>
    <name type="ordered locus">At4g23140</name>
    <name type="ORF">F21P8.30</name>
    <name type="ORF">F7H19.330</name>
</gene>
<evidence type="ECO:0000250" key="1">
    <source>
        <dbReference type="UniProtKB" id="O48814"/>
    </source>
</evidence>
<evidence type="ECO:0000255" key="2"/>
<evidence type="ECO:0000255" key="3">
    <source>
        <dbReference type="PROSITE-ProRule" id="PRU00159"/>
    </source>
</evidence>
<evidence type="ECO:0000255" key="4">
    <source>
        <dbReference type="PROSITE-ProRule" id="PRU00806"/>
    </source>
</evidence>
<evidence type="ECO:0000255" key="5">
    <source>
        <dbReference type="PROSITE-ProRule" id="PRU10027"/>
    </source>
</evidence>
<evidence type="ECO:0000256" key="6">
    <source>
        <dbReference type="SAM" id="MobiDB-lite"/>
    </source>
</evidence>
<evidence type="ECO:0000269" key="7">
    <source>
    </source>
</evidence>
<evidence type="ECO:0000303" key="8">
    <source>
    </source>
</evidence>
<evidence type="ECO:0000305" key="9"/>
<name>CRK6_ARATH</name>
<feature type="signal peptide" evidence="2">
    <location>
        <begin position="1"/>
        <end position="24"/>
    </location>
</feature>
<feature type="chain" id="PRO_0000295053" description="Cysteine-rich receptor-like protein kinase 6">
    <location>
        <begin position="25"/>
        <end position="674"/>
    </location>
</feature>
<feature type="topological domain" description="Extracellular" evidence="2">
    <location>
        <begin position="25"/>
        <end position="289"/>
    </location>
</feature>
<feature type="transmembrane region" description="Helical" evidence="2">
    <location>
        <begin position="290"/>
        <end position="310"/>
    </location>
</feature>
<feature type="topological domain" description="Cytoplasmic" evidence="2">
    <location>
        <begin position="311"/>
        <end position="674"/>
    </location>
</feature>
<feature type="domain" description="Gnk2-homologous 1" evidence="4">
    <location>
        <begin position="28"/>
        <end position="132"/>
    </location>
</feature>
<feature type="domain" description="Gnk2-homologous 2" evidence="4">
    <location>
        <begin position="139"/>
        <end position="245"/>
    </location>
</feature>
<feature type="domain" description="Protein kinase" evidence="3">
    <location>
        <begin position="351"/>
        <end position="637"/>
    </location>
</feature>
<feature type="region of interest" description="Disordered" evidence="6">
    <location>
        <begin position="254"/>
        <end position="284"/>
    </location>
</feature>
<feature type="region of interest" description="Disordered" evidence="6">
    <location>
        <begin position="648"/>
        <end position="674"/>
    </location>
</feature>
<feature type="compositionally biased region" description="Pro residues" evidence="6">
    <location>
        <begin position="254"/>
        <end position="266"/>
    </location>
</feature>
<feature type="compositionally biased region" description="Low complexity" evidence="6">
    <location>
        <begin position="268"/>
        <end position="284"/>
    </location>
</feature>
<feature type="compositionally biased region" description="Polar residues" evidence="6">
    <location>
        <begin position="650"/>
        <end position="659"/>
    </location>
</feature>
<feature type="active site" description="Proton acceptor" evidence="3 5">
    <location>
        <position position="476"/>
    </location>
</feature>
<feature type="binding site" evidence="3">
    <location>
        <begin position="357"/>
        <end position="365"/>
    </location>
    <ligand>
        <name>ATP</name>
        <dbReference type="ChEBI" id="CHEBI:30616"/>
    </ligand>
</feature>
<feature type="binding site" evidence="3">
    <location>
        <position position="379"/>
    </location>
    <ligand>
        <name>ATP</name>
        <dbReference type="ChEBI" id="CHEBI:30616"/>
    </ligand>
</feature>
<feature type="modified residue" description="Phosphotyrosine" evidence="1">
    <location>
        <position position="424"/>
    </location>
</feature>
<feature type="modified residue" description="Phosphoserine" evidence="1">
    <location>
        <position position="480"/>
    </location>
</feature>
<feature type="modified residue" description="Phosphothreonine" evidence="1">
    <location>
        <position position="516"/>
    </location>
</feature>
<feature type="modified residue" description="Phosphotyrosine" evidence="1">
    <location>
        <position position="524"/>
    </location>
</feature>
<feature type="glycosylation site" description="N-linked (GlcNAc...) asparagine" evidence="2">
    <location>
        <position position="36"/>
    </location>
</feature>
<feature type="glycosylation site" description="N-linked (GlcNAc...) asparagine" evidence="2">
    <location>
        <position position="43"/>
    </location>
</feature>
<feature type="glycosylation site" description="N-linked (GlcNAc...) asparagine" evidence="2">
    <location>
        <position position="61"/>
    </location>
</feature>
<feature type="glycosylation site" description="N-linked (GlcNAc...) asparagine" evidence="2">
    <location>
        <position position="70"/>
    </location>
</feature>
<feature type="glycosylation site" description="N-linked (GlcNAc...) asparagine" evidence="2">
    <location>
        <position position="104"/>
    </location>
</feature>
<feature type="glycosylation site" description="N-linked (GlcNAc...) asparagine" evidence="2">
    <location>
        <position position="178"/>
    </location>
</feature>
<feature type="glycosylation site" description="N-linked (GlcNAc...) asparagine" evidence="2">
    <location>
        <position position="247"/>
    </location>
</feature>
<feature type="glycosylation site" description="N-linked (GlcNAc...) asparagine" evidence="2">
    <location>
        <position position="286"/>
    </location>
</feature>
<feature type="splice variant" id="VSP_026687" description="In isoform 2." evidence="8">
    <original>Y</original>
    <variation>YFVVDSS</variation>
    <location>
        <position position="517"/>
    </location>
</feature>
<reference key="1">
    <citation type="journal article" date="2000" name="Plant J.">
        <title>Identification of genes encoding receptor-like protein kinases as possible targets of pathogen- and salicylic acid-induced WRKY DNA-binding proteins in Arabidopsis.</title>
        <authorList>
            <person name="Du L."/>
            <person name="Chen Z."/>
        </authorList>
    </citation>
    <scope>NUCLEOTIDE SEQUENCE [MRNA] (ISOFORM 1)</scope>
    <scope>INDUCTION</scope>
</reference>
<reference key="2">
    <citation type="journal article" date="1999" name="Nature">
        <title>Sequence and analysis of chromosome 4 of the plant Arabidopsis thaliana.</title>
        <authorList>
            <person name="Mayer K.F.X."/>
            <person name="Schueller C."/>
            <person name="Wambutt R."/>
            <person name="Murphy G."/>
            <person name="Volckaert G."/>
            <person name="Pohl T."/>
            <person name="Duesterhoeft A."/>
            <person name="Stiekema W."/>
            <person name="Entian K.-D."/>
            <person name="Terryn N."/>
            <person name="Harris B."/>
            <person name="Ansorge W."/>
            <person name="Brandt P."/>
            <person name="Grivell L.A."/>
            <person name="Rieger M."/>
            <person name="Weichselgartner M."/>
            <person name="de Simone V."/>
            <person name="Obermaier B."/>
            <person name="Mache R."/>
            <person name="Mueller M."/>
            <person name="Kreis M."/>
            <person name="Delseny M."/>
            <person name="Puigdomenech P."/>
            <person name="Watson M."/>
            <person name="Schmidtheini T."/>
            <person name="Reichert B."/>
            <person name="Portetelle D."/>
            <person name="Perez-Alonso M."/>
            <person name="Boutry M."/>
            <person name="Bancroft I."/>
            <person name="Vos P."/>
            <person name="Hoheisel J."/>
            <person name="Zimmermann W."/>
            <person name="Wedler H."/>
            <person name="Ridley P."/>
            <person name="Langham S.-A."/>
            <person name="McCullagh B."/>
            <person name="Bilham L."/>
            <person name="Robben J."/>
            <person name="van der Schueren J."/>
            <person name="Grymonprez B."/>
            <person name="Chuang Y.-J."/>
            <person name="Vandenbussche F."/>
            <person name="Braeken M."/>
            <person name="Weltjens I."/>
            <person name="Voet M."/>
            <person name="Bastiaens I."/>
            <person name="Aert R."/>
            <person name="Defoor E."/>
            <person name="Weitzenegger T."/>
            <person name="Bothe G."/>
            <person name="Ramsperger U."/>
            <person name="Hilbert H."/>
            <person name="Braun M."/>
            <person name="Holzer E."/>
            <person name="Brandt A."/>
            <person name="Peters S."/>
            <person name="van Staveren M."/>
            <person name="Dirkse W."/>
            <person name="Mooijman P."/>
            <person name="Klein Lankhorst R."/>
            <person name="Rose M."/>
            <person name="Hauf J."/>
            <person name="Koetter P."/>
            <person name="Berneiser S."/>
            <person name="Hempel S."/>
            <person name="Feldpausch M."/>
            <person name="Lamberth S."/>
            <person name="Van den Daele H."/>
            <person name="De Keyser A."/>
            <person name="Buysshaert C."/>
            <person name="Gielen J."/>
            <person name="Villarroel R."/>
            <person name="De Clercq R."/>
            <person name="van Montagu M."/>
            <person name="Rogers J."/>
            <person name="Cronin A."/>
            <person name="Quail M.A."/>
            <person name="Bray-Allen S."/>
            <person name="Clark L."/>
            <person name="Doggett J."/>
            <person name="Hall S."/>
            <person name="Kay M."/>
            <person name="Lennard N."/>
            <person name="McLay K."/>
            <person name="Mayes R."/>
            <person name="Pettett A."/>
            <person name="Rajandream M.A."/>
            <person name="Lyne M."/>
            <person name="Benes V."/>
            <person name="Rechmann S."/>
            <person name="Borkova D."/>
            <person name="Bloecker H."/>
            <person name="Scharfe M."/>
            <person name="Grimm M."/>
            <person name="Loehnert T.-H."/>
            <person name="Dose S."/>
            <person name="de Haan M."/>
            <person name="Maarse A.C."/>
            <person name="Schaefer M."/>
            <person name="Mueller-Auer S."/>
            <person name="Gabel C."/>
            <person name="Fuchs M."/>
            <person name="Fartmann B."/>
            <person name="Granderath K."/>
            <person name="Dauner D."/>
            <person name="Herzl A."/>
            <person name="Neumann S."/>
            <person name="Argiriou A."/>
            <person name="Vitale D."/>
            <person name="Liguori R."/>
            <person name="Piravandi E."/>
            <person name="Massenet O."/>
            <person name="Quigley F."/>
            <person name="Clabauld G."/>
            <person name="Muendlein A."/>
            <person name="Felber R."/>
            <person name="Schnabl S."/>
            <person name="Hiller R."/>
            <person name="Schmidt W."/>
            <person name="Lecharny A."/>
            <person name="Aubourg S."/>
            <person name="Chefdor F."/>
            <person name="Cooke R."/>
            <person name="Berger C."/>
            <person name="Monfort A."/>
            <person name="Casacuberta E."/>
            <person name="Gibbons T."/>
            <person name="Weber N."/>
            <person name="Vandenbol M."/>
            <person name="Bargues M."/>
            <person name="Terol J."/>
            <person name="Torres A."/>
            <person name="Perez-Perez A."/>
            <person name="Purnelle B."/>
            <person name="Bent E."/>
            <person name="Johnson S."/>
            <person name="Tacon D."/>
            <person name="Jesse T."/>
            <person name="Heijnen L."/>
            <person name="Schwarz S."/>
            <person name="Scholler P."/>
            <person name="Heber S."/>
            <person name="Francs P."/>
            <person name="Bielke C."/>
            <person name="Frishman D."/>
            <person name="Haase D."/>
            <person name="Lemcke K."/>
            <person name="Mewes H.-W."/>
            <person name="Stocker S."/>
            <person name="Zaccaria P."/>
            <person name="Bevan M."/>
            <person name="Wilson R.K."/>
            <person name="de la Bastide M."/>
            <person name="Habermann K."/>
            <person name="Parnell L."/>
            <person name="Dedhia N."/>
            <person name="Gnoj L."/>
            <person name="Schutz K."/>
            <person name="Huang E."/>
            <person name="Spiegel L."/>
            <person name="Sekhon M."/>
            <person name="Murray J."/>
            <person name="Sheet P."/>
            <person name="Cordes M."/>
            <person name="Abu-Threideh J."/>
            <person name="Stoneking T."/>
            <person name="Kalicki J."/>
            <person name="Graves T."/>
            <person name="Harmon G."/>
            <person name="Edwards J."/>
            <person name="Latreille P."/>
            <person name="Courtney L."/>
            <person name="Cloud J."/>
            <person name="Abbott A."/>
            <person name="Scott K."/>
            <person name="Johnson D."/>
            <person name="Minx P."/>
            <person name="Bentley D."/>
            <person name="Fulton B."/>
            <person name="Miller N."/>
            <person name="Greco T."/>
            <person name="Kemp K."/>
            <person name="Kramer J."/>
            <person name="Fulton L."/>
            <person name="Mardis E."/>
            <person name="Dante M."/>
            <person name="Pepin K."/>
            <person name="Hillier L.W."/>
            <person name="Nelson J."/>
            <person name="Spieth J."/>
            <person name="Ryan E."/>
            <person name="Andrews S."/>
            <person name="Geisel C."/>
            <person name="Layman D."/>
            <person name="Du H."/>
            <person name="Ali J."/>
            <person name="Berghoff A."/>
            <person name="Jones K."/>
            <person name="Drone K."/>
            <person name="Cotton M."/>
            <person name="Joshu C."/>
            <person name="Antonoiu B."/>
            <person name="Zidanic M."/>
            <person name="Strong C."/>
            <person name="Sun H."/>
            <person name="Lamar B."/>
            <person name="Yordan C."/>
            <person name="Ma P."/>
            <person name="Zhong J."/>
            <person name="Preston R."/>
            <person name="Vil D."/>
            <person name="Shekher M."/>
            <person name="Matero A."/>
            <person name="Shah R."/>
            <person name="Swaby I.K."/>
            <person name="O'Shaughnessy A."/>
            <person name="Rodriguez M."/>
            <person name="Hoffman J."/>
            <person name="Till S."/>
            <person name="Granat S."/>
            <person name="Shohdy N."/>
            <person name="Hasegawa A."/>
            <person name="Hameed A."/>
            <person name="Lodhi M."/>
            <person name="Johnson A."/>
            <person name="Chen E."/>
            <person name="Marra M.A."/>
            <person name="Martienssen R."/>
            <person name="McCombie W.R."/>
        </authorList>
    </citation>
    <scope>NUCLEOTIDE SEQUENCE [LARGE SCALE GENOMIC DNA]</scope>
    <source>
        <strain>cv. Columbia</strain>
    </source>
</reference>
<reference key="3">
    <citation type="journal article" date="2017" name="Plant J.">
        <title>Araport11: a complete reannotation of the Arabidopsis thaliana reference genome.</title>
        <authorList>
            <person name="Cheng C.Y."/>
            <person name="Krishnakumar V."/>
            <person name="Chan A.P."/>
            <person name="Thibaud-Nissen F."/>
            <person name="Schobel S."/>
            <person name="Town C.D."/>
        </authorList>
    </citation>
    <scope>GENOME REANNOTATION</scope>
    <source>
        <strain>cv. Columbia</strain>
    </source>
</reference>
<reference key="4">
    <citation type="journal article" date="2002" name="Science">
        <title>Functional annotation of a full-length Arabidopsis cDNA collection.</title>
        <authorList>
            <person name="Seki M."/>
            <person name="Narusaka M."/>
            <person name="Kamiya A."/>
            <person name="Ishida J."/>
            <person name="Satou M."/>
            <person name="Sakurai T."/>
            <person name="Nakajima M."/>
            <person name="Enju A."/>
            <person name="Akiyama K."/>
            <person name="Oono Y."/>
            <person name="Muramatsu M."/>
            <person name="Hayashizaki Y."/>
            <person name="Kawai J."/>
            <person name="Carninci P."/>
            <person name="Itoh M."/>
            <person name="Ishii Y."/>
            <person name="Arakawa T."/>
            <person name="Shibata K."/>
            <person name="Shinagawa A."/>
            <person name="Shinozaki K."/>
        </authorList>
    </citation>
    <scope>NUCLEOTIDE SEQUENCE [LARGE SCALE MRNA] (ISOFORM 2)</scope>
    <source>
        <strain>cv. Columbia</strain>
    </source>
</reference>
<reference key="5">
    <citation type="journal article" date="2001" name="Plant Physiol.">
        <title>A superfamily of proteins with novel cysteine-rich repeats.</title>
        <authorList>
            <person name="Chen Z."/>
        </authorList>
    </citation>
    <scope>GENE FAMILY ORGANIZATION</scope>
    <scope>NOMENCLATURE</scope>
</reference>
<comment type="catalytic activity">
    <reaction>
        <text>L-seryl-[protein] + ATP = O-phospho-L-seryl-[protein] + ADP + H(+)</text>
        <dbReference type="Rhea" id="RHEA:17989"/>
        <dbReference type="Rhea" id="RHEA-COMP:9863"/>
        <dbReference type="Rhea" id="RHEA-COMP:11604"/>
        <dbReference type="ChEBI" id="CHEBI:15378"/>
        <dbReference type="ChEBI" id="CHEBI:29999"/>
        <dbReference type="ChEBI" id="CHEBI:30616"/>
        <dbReference type="ChEBI" id="CHEBI:83421"/>
        <dbReference type="ChEBI" id="CHEBI:456216"/>
    </reaction>
</comment>
<comment type="catalytic activity">
    <reaction>
        <text>L-threonyl-[protein] + ATP = O-phospho-L-threonyl-[protein] + ADP + H(+)</text>
        <dbReference type="Rhea" id="RHEA:46608"/>
        <dbReference type="Rhea" id="RHEA-COMP:11060"/>
        <dbReference type="Rhea" id="RHEA-COMP:11605"/>
        <dbReference type="ChEBI" id="CHEBI:15378"/>
        <dbReference type="ChEBI" id="CHEBI:30013"/>
        <dbReference type="ChEBI" id="CHEBI:30616"/>
        <dbReference type="ChEBI" id="CHEBI:61977"/>
        <dbReference type="ChEBI" id="CHEBI:456216"/>
    </reaction>
</comment>
<comment type="interaction">
    <interactant intactId="EBI-2023993">
        <id>Q9C5S9</id>
    </interactant>
    <interactant intactId="EBI-1646157">
        <id>P46014</id>
        <label>KAPP</label>
    </interactant>
    <organismsDiffer>false</organismsDiffer>
    <experiments>2</experiments>
</comment>
<comment type="subcellular location">
    <subcellularLocation>
        <location evidence="9">Membrane</location>
        <topology evidence="9">Single-pass membrane protein</topology>
    </subcellularLocation>
</comment>
<comment type="alternative products">
    <event type="alternative splicing"/>
    <isoform>
        <id>Q9C5S9-1</id>
        <name>1</name>
        <sequence type="displayed"/>
    </isoform>
    <isoform>
        <id>Q9C5S9-2</id>
        <name>2</name>
        <sequence type="described" ref="VSP_026687"/>
    </isoform>
</comment>
<comment type="induction">
    <text evidence="7">By salicylic acid (SA) or by a bacterial pathogen infection. May be regulated by WRKY DNA-binding proteins at the transcriptional level.</text>
</comment>
<comment type="miscellaneous">
    <molecule>Isoform 2</molecule>
    <text evidence="9">May be due to a competing acceptor splice site.</text>
</comment>
<comment type="similarity">
    <text evidence="3">Belongs to the protein kinase superfamily. Ser/Thr protein kinase family. CRK subfamily.</text>
</comment>
<comment type="sequence caution" evidence="9">
    <conflict type="erroneous gene model prediction">
        <sequence resource="EMBL-CDS" id="CAA18461"/>
    </conflict>
</comment>
<comment type="sequence caution" evidence="9">
    <conflict type="erroneous gene model prediction">
        <sequence resource="EMBL-CDS" id="CAA19830"/>
    </conflict>
</comment>
<comment type="sequence caution" evidence="9">
    <conflict type="erroneous gene model prediction">
        <sequence resource="EMBL-CDS" id="CAB79269"/>
    </conflict>
</comment>
<accession>Q9C5S9</accession>
<accession>O65466</accession>
<accession>Q8GX18</accession>
<proteinExistence type="evidence at protein level"/>
<dbReference type="EC" id="2.7.11.-"/>
<dbReference type="EMBL" id="AF224706">
    <property type="protein sequence ID" value="AAK28316.1"/>
    <property type="molecule type" value="mRNA"/>
</dbReference>
<dbReference type="EMBL" id="AL022347">
    <property type="protein sequence ID" value="CAA18461.1"/>
    <property type="status" value="ALT_SEQ"/>
    <property type="molecule type" value="Genomic_DNA"/>
</dbReference>
<dbReference type="EMBL" id="AL031018">
    <property type="protein sequence ID" value="CAA19830.1"/>
    <property type="status" value="ALT_SEQ"/>
    <property type="molecule type" value="Genomic_DNA"/>
</dbReference>
<dbReference type="EMBL" id="AL161558">
    <property type="protein sequence ID" value="CAB79269.1"/>
    <property type="status" value="ALT_SEQ"/>
    <property type="molecule type" value="Genomic_DNA"/>
</dbReference>
<dbReference type="EMBL" id="CP002687">
    <property type="protein sequence ID" value="AEE84714.1"/>
    <property type="molecule type" value="Genomic_DNA"/>
</dbReference>
<dbReference type="EMBL" id="CP002687">
    <property type="protein sequence ID" value="AEE84715.1"/>
    <property type="molecule type" value="Genomic_DNA"/>
</dbReference>
<dbReference type="EMBL" id="AK118493">
    <property type="protein sequence ID" value="BAC43097.1"/>
    <property type="molecule type" value="mRNA"/>
</dbReference>
<dbReference type="PIR" id="T04831">
    <property type="entry name" value="T04831"/>
</dbReference>
<dbReference type="RefSeq" id="NP_567678.1">
    <molecule id="Q9C5S9-1"/>
    <property type="nucleotide sequence ID" value="NM_118443.3"/>
</dbReference>
<dbReference type="RefSeq" id="NP_849426.1">
    <molecule id="Q9C5S9-2"/>
    <property type="nucleotide sequence ID" value="NM_179095.1"/>
</dbReference>
<dbReference type="SMR" id="Q9C5S9"/>
<dbReference type="BioGRID" id="13702">
    <property type="interactions" value="2"/>
</dbReference>
<dbReference type="FunCoup" id="Q9C5S9">
    <property type="interactions" value="189"/>
</dbReference>
<dbReference type="IntAct" id="Q9C5S9">
    <property type="interactions" value="2"/>
</dbReference>
<dbReference type="STRING" id="3702.Q9C5S9"/>
<dbReference type="GlyCosmos" id="Q9C5S9">
    <property type="glycosylation" value="8 sites, No reported glycans"/>
</dbReference>
<dbReference type="GlyGen" id="Q9C5S9">
    <property type="glycosylation" value="8 sites"/>
</dbReference>
<dbReference type="iPTMnet" id="Q9C5S9"/>
<dbReference type="PaxDb" id="3702-AT4G23140.2"/>
<dbReference type="ProteomicsDB" id="224532">
    <molecule id="Q9C5S9-1"/>
</dbReference>
<dbReference type="EnsemblPlants" id="AT4G23140.1">
    <molecule id="Q9C5S9-1"/>
    <property type="protein sequence ID" value="AT4G23140.1"/>
    <property type="gene ID" value="AT4G23140"/>
</dbReference>
<dbReference type="EnsemblPlants" id="AT4G23140.2">
    <molecule id="Q9C5S9-2"/>
    <property type="protein sequence ID" value="AT4G23140.2"/>
    <property type="gene ID" value="AT4G23140"/>
</dbReference>
<dbReference type="GeneID" id="828413"/>
<dbReference type="Gramene" id="AT4G23140.1">
    <molecule id="Q9C5S9-1"/>
    <property type="protein sequence ID" value="AT4G23140.1"/>
    <property type="gene ID" value="AT4G23140"/>
</dbReference>
<dbReference type="Gramene" id="AT4G23140.2">
    <molecule id="Q9C5S9-2"/>
    <property type="protein sequence ID" value="AT4G23140.2"/>
    <property type="gene ID" value="AT4G23140"/>
</dbReference>
<dbReference type="KEGG" id="ath:AT4G23140"/>
<dbReference type="Araport" id="AT4G23140"/>
<dbReference type="TAIR" id="AT4G23140">
    <property type="gene designation" value="CRK6"/>
</dbReference>
<dbReference type="eggNOG" id="ENOG502QWDY">
    <property type="taxonomic scope" value="Eukaryota"/>
</dbReference>
<dbReference type="HOGENOM" id="CLU_000288_35_2_1"/>
<dbReference type="InParanoid" id="Q9C5S9"/>
<dbReference type="OMA" id="AYHISYA"/>
<dbReference type="PhylomeDB" id="Q9C5S9"/>
<dbReference type="PRO" id="PR:Q9C5S9"/>
<dbReference type="Proteomes" id="UP000006548">
    <property type="component" value="Chromosome 4"/>
</dbReference>
<dbReference type="ExpressionAtlas" id="Q9C5S9">
    <property type="expression patterns" value="baseline and differential"/>
</dbReference>
<dbReference type="GO" id="GO:0005829">
    <property type="term" value="C:cytosol"/>
    <property type="evidence" value="ECO:0007005"/>
    <property type="project" value="TAIR"/>
</dbReference>
<dbReference type="GO" id="GO:0005886">
    <property type="term" value="C:plasma membrane"/>
    <property type="evidence" value="ECO:0000314"/>
    <property type="project" value="TAIR"/>
</dbReference>
<dbReference type="GO" id="GO:0005524">
    <property type="term" value="F:ATP binding"/>
    <property type="evidence" value="ECO:0007669"/>
    <property type="project" value="UniProtKB-KW"/>
</dbReference>
<dbReference type="GO" id="GO:0004672">
    <property type="term" value="F:protein kinase activity"/>
    <property type="evidence" value="ECO:0000314"/>
    <property type="project" value="TAIR"/>
</dbReference>
<dbReference type="GO" id="GO:0106310">
    <property type="term" value="F:protein serine kinase activity"/>
    <property type="evidence" value="ECO:0007669"/>
    <property type="project" value="RHEA"/>
</dbReference>
<dbReference type="GO" id="GO:0004674">
    <property type="term" value="F:protein serine/threonine kinase activity"/>
    <property type="evidence" value="ECO:0007669"/>
    <property type="project" value="UniProtKB-KW"/>
</dbReference>
<dbReference type="GO" id="GO:0000302">
    <property type="term" value="P:response to reactive oxygen species"/>
    <property type="evidence" value="ECO:0000270"/>
    <property type="project" value="TAIR"/>
</dbReference>
<dbReference type="CDD" id="cd23509">
    <property type="entry name" value="Gnk2-like"/>
    <property type="match status" value="2"/>
</dbReference>
<dbReference type="CDD" id="cd14066">
    <property type="entry name" value="STKc_IRAK"/>
    <property type="match status" value="1"/>
</dbReference>
<dbReference type="FunFam" id="3.30.200.20:FF:000142">
    <property type="entry name" value="Cysteine-rich receptor-like protein kinase 10"/>
    <property type="match status" value="1"/>
</dbReference>
<dbReference type="FunFam" id="1.10.510.10:FF:000129">
    <property type="entry name" value="cysteine-rich receptor-like protein kinase 10"/>
    <property type="match status" value="1"/>
</dbReference>
<dbReference type="FunFam" id="3.30.430.20:FF:000003">
    <property type="entry name" value="Cysteine-rich RLK (RECEPTOR-like protein kinase) 10"/>
    <property type="match status" value="1"/>
</dbReference>
<dbReference type="Gene3D" id="3.30.430.20">
    <property type="entry name" value="Gnk2 domain, C-X8-C-X2-C motif"/>
    <property type="match status" value="2"/>
</dbReference>
<dbReference type="Gene3D" id="3.30.200.20">
    <property type="entry name" value="Phosphorylase Kinase, domain 1"/>
    <property type="match status" value="1"/>
</dbReference>
<dbReference type="Gene3D" id="1.10.510.10">
    <property type="entry name" value="Transferase(Phosphotransferase) domain 1"/>
    <property type="match status" value="1"/>
</dbReference>
<dbReference type="InterPro" id="IPR054603">
    <property type="entry name" value="CR_prot_dom_plant"/>
</dbReference>
<dbReference type="InterPro" id="IPR002902">
    <property type="entry name" value="GNK2"/>
</dbReference>
<dbReference type="InterPro" id="IPR038408">
    <property type="entry name" value="GNK2_sf"/>
</dbReference>
<dbReference type="InterPro" id="IPR011009">
    <property type="entry name" value="Kinase-like_dom_sf"/>
</dbReference>
<dbReference type="InterPro" id="IPR000719">
    <property type="entry name" value="Prot_kinase_dom"/>
</dbReference>
<dbReference type="InterPro" id="IPR017441">
    <property type="entry name" value="Protein_kinase_ATP_BS"/>
</dbReference>
<dbReference type="InterPro" id="IPR001245">
    <property type="entry name" value="Ser-Thr/Tyr_kinase_cat_dom"/>
</dbReference>
<dbReference type="InterPro" id="IPR008271">
    <property type="entry name" value="Ser/Thr_kinase_AS"/>
</dbReference>
<dbReference type="PANTHER" id="PTHR27002:SF1001">
    <property type="entry name" value="CYSTEINE-RICH RECEPTOR-LIKE PROTEIN KINASE 10-RELATED"/>
    <property type="match status" value="1"/>
</dbReference>
<dbReference type="PANTHER" id="PTHR27002">
    <property type="entry name" value="RECEPTOR-LIKE SERINE/THREONINE-PROTEIN KINASE SD1-8"/>
    <property type="match status" value="1"/>
</dbReference>
<dbReference type="Pfam" id="PF22812">
    <property type="entry name" value="CR_prot_dom_plant"/>
    <property type="match status" value="1"/>
</dbReference>
<dbReference type="Pfam" id="PF07714">
    <property type="entry name" value="PK_Tyr_Ser-Thr"/>
    <property type="match status" value="1"/>
</dbReference>
<dbReference type="Pfam" id="PF01657">
    <property type="entry name" value="Stress-antifung"/>
    <property type="match status" value="2"/>
</dbReference>
<dbReference type="SMART" id="SM00220">
    <property type="entry name" value="S_TKc"/>
    <property type="match status" value="1"/>
</dbReference>
<dbReference type="SUPFAM" id="SSF56112">
    <property type="entry name" value="Protein kinase-like (PK-like)"/>
    <property type="match status" value="1"/>
</dbReference>
<dbReference type="PROSITE" id="PS51473">
    <property type="entry name" value="GNK2"/>
    <property type="match status" value="2"/>
</dbReference>
<dbReference type="PROSITE" id="PS00107">
    <property type="entry name" value="PROTEIN_KINASE_ATP"/>
    <property type="match status" value="1"/>
</dbReference>
<dbReference type="PROSITE" id="PS50011">
    <property type="entry name" value="PROTEIN_KINASE_DOM"/>
    <property type="match status" value="1"/>
</dbReference>
<dbReference type="PROSITE" id="PS00108">
    <property type="entry name" value="PROTEIN_KINASE_ST"/>
    <property type="match status" value="1"/>
</dbReference>
<organism>
    <name type="scientific">Arabidopsis thaliana</name>
    <name type="common">Mouse-ear cress</name>
    <dbReference type="NCBI Taxonomy" id="3702"/>
    <lineage>
        <taxon>Eukaryota</taxon>
        <taxon>Viridiplantae</taxon>
        <taxon>Streptophyta</taxon>
        <taxon>Embryophyta</taxon>
        <taxon>Tracheophyta</taxon>
        <taxon>Spermatophyta</taxon>
        <taxon>Magnoliopsida</taxon>
        <taxon>eudicotyledons</taxon>
        <taxon>Gunneridae</taxon>
        <taxon>Pentapetalae</taxon>
        <taxon>rosids</taxon>
        <taxon>malvids</taxon>
        <taxon>Brassicales</taxon>
        <taxon>Brassicaceae</taxon>
        <taxon>Camelineae</taxon>
        <taxon>Arabidopsis</taxon>
    </lineage>
</organism>